<accession>A7HLA6</accession>
<protein>
    <recommendedName>
        <fullName evidence="1">Large ribosomal subunit protein bL32</fullName>
    </recommendedName>
    <alternativeName>
        <fullName evidence="2">50S ribosomal protein L32</fullName>
    </alternativeName>
</protein>
<keyword id="KW-1185">Reference proteome</keyword>
<keyword id="KW-0687">Ribonucleoprotein</keyword>
<keyword id="KW-0689">Ribosomal protein</keyword>
<organism>
    <name type="scientific">Fervidobacterium nodosum (strain ATCC 35602 / DSM 5306 / Rt17-B1)</name>
    <dbReference type="NCBI Taxonomy" id="381764"/>
    <lineage>
        <taxon>Bacteria</taxon>
        <taxon>Thermotogati</taxon>
        <taxon>Thermotogota</taxon>
        <taxon>Thermotogae</taxon>
        <taxon>Thermotogales</taxon>
        <taxon>Fervidobacteriaceae</taxon>
        <taxon>Fervidobacterium</taxon>
    </lineage>
</organism>
<gene>
    <name evidence="1" type="primary">rpmF</name>
    <name type="ordered locus">Fnod_0836</name>
</gene>
<dbReference type="EMBL" id="CP000771">
    <property type="protein sequence ID" value="ABS60689.1"/>
    <property type="molecule type" value="Genomic_DNA"/>
</dbReference>
<dbReference type="RefSeq" id="WP_011994005.1">
    <property type="nucleotide sequence ID" value="NC_009718.1"/>
</dbReference>
<dbReference type="SMR" id="A7HLA6"/>
<dbReference type="STRING" id="381764.Fnod_0836"/>
<dbReference type="KEGG" id="fno:Fnod_0836"/>
<dbReference type="eggNOG" id="COG0333">
    <property type="taxonomic scope" value="Bacteria"/>
</dbReference>
<dbReference type="HOGENOM" id="CLU_129084_1_1_0"/>
<dbReference type="OrthoDB" id="9812874at2"/>
<dbReference type="Proteomes" id="UP000002415">
    <property type="component" value="Chromosome"/>
</dbReference>
<dbReference type="GO" id="GO:0015934">
    <property type="term" value="C:large ribosomal subunit"/>
    <property type="evidence" value="ECO:0007669"/>
    <property type="project" value="InterPro"/>
</dbReference>
<dbReference type="GO" id="GO:0003735">
    <property type="term" value="F:structural constituent of ribosome"/>
    <property type="evidence" value="ECO:0007669"/>
    <property type="project" value="InterPro"/>
</dbReference>
<dbReference type="GO" id="GO:0006412">
    <property type="term" value="P:translation"/>
    <property type="evidence" value="ECO:0007669"/>
    <property type="project" value="UniProtKB-UniRule"/>
</dbReference>
<dbReference type="HAMAP" id="MF_00340">
    <property type="entry name" value="Ribosomal_bL32"/>
    <property type="match status" value="1"/>
</dbReference>
<dbReference type="InterPro" id="IPR002677">
    <property type="entry name" value="Ribosomal_bL32"/>
</dbReference>
<dbReference type="InterPro" id="IPR044957">
    <property type="entry name" value="Ribosomal_bL32_bact"/>
</dbReference>
<dbReference type="InterPro" id="IPR011332">
    <property type="entry name" value="Ribosomal_zn-bd"/>
</dbReference>
<dbReference type="NCBIfam" id="TIGR01031">
    <property type="entry name" value="rpmF_bact"/>
    <property type="match status" value="1"/>
</dbReference>
<dbReference type="PANTHER" id="PTHR35534">
    <property type="entry name" value="50S RIBOSOMAL PROTEIN L32"/>
    <property type="match status" value="1"/>
</dbReference>
<dbReference type="PANTHER" id="PTHR35534:SF1">
    <property type="entry name" value="LARGE RIBOSOMAL SUBUNIT PROTEIN BL32"/>
    <property type="match status" value="1"/>
</dbReference>
<dbReference type="Pfam" id="PF01783">
    <property type="entry name" value="Ribosomal_L32p"/>
    <property type="match status" value="1"/>
</dbReference>
<dbReference type="SUPFAM" id="SSF57829">
    <property type="entry name" value="Zn-binding ribosomal proteins"/>
    <property type="match status" value="1"/>
</dbReference>
<reference key="1">
    <citation type="submission" date="2007-07" db="EMBL/GenBank/DDBJ databases">
        <title>Complete sequence of Fervidobacterium nodosum Rt17-B1.</title>
        <authorList>
            <consortium name="US DOE Joint Genome Institute"/>
            <person name="Copeland A."/>
            <person name="Lucas S."/>
            <person name="Lapidus A."/>
            <person name="Barry K."/>
            <person name="Glavina del Rio T."/>
            <person name="Dalin E."/>
            <person name="Tice H."/>
            <person name="Pitluck S."/>
            <person name="Saunders E."/>
            <person name="Brettin T."/>
            <person name="Bruce D."/>
            <person name="Detter J.C."/>
            <person name="Han C."/>
            <person name="Schmutz J."/>
            <person name="Larimer F."/>
            <person name="Land M."/>
            <person name="Hauser L."/>
            <person name="Kyrpides N."/>
            <person name="Mikhailova N."/>
            <person name="Nelson K."/>
            <person name="Gogarten J.P."/>
            <person name="Noll K."/>
            <person name="Richardson P."/>
        </authorList>
    </citation>
    <scope>NUCLEOTIDE SEQUENCE [LARGE SCALE GENOMIC DNA]</scope>
    <source>
        <strain>ATCC 35602 / DSM 5306 / Rt17-B1</strain>
    </source>
</reference>
<name>RL32_FERNB</name>
<sequence length="60" mass="6778">MAVPKQKRSSSRTHHKRAKIYKAFSVAVTTCPNCGAPKQPHRVCLRCGYYGKKQVFEVAK</sequence>
<evidence type="ECO:0000255" key="1">
    <source>
        <dbReference type="HAMAP-Rule" id="MF_00340"/>
    </source>
</evidence>
<evidence type="ECO:0000305" key="2"/>
<comment type="similarity">
    <text evidence="1">Belongs to the bacterial ribosomal protein bL32 family.</text>
</comment>
<feature type="chain" id="PRO_1000072062" description="Large ribosomal subunit protein bL32">
    <location>
        <begin position="1"/>
        <end position="60"/>
    </location>
</feature>
<proteinExistence type="inferred from homology"/>